<reference key="1">
    <citation type="journal article" date="2003" name="Proc. Natl. Acad. Sci. U.S.A.">
        <title>The complete genome sequence of Chromobacterium violaceum reveals remarkable and exploitable bacterial adaptability.</title>
        <authorList>
            <person name="Vasconcelos A.T.R."/>
            <person name="de Almeida D.F."/>
            <person name="Hungria M."/>
            <person name="Guimaraes C.T."/>
            <person name="Antonio R.V."/>
            <person name="Almeida F.C."/>
            <person name="de Almeida L.G.P."/>
            <person name="de Almeida R."/>
            <person name="Alves-Gomes J.A."/>
            <person name="Andrade E.M."/>
            <person name="Araripe J."/>
            <person name="de Araujo M.F.F."/>
            <person name="Astolfi-Filho S."/>
            <person name="Azevedo V."/>
            <person name="Baptista A.J."/>
            <person name="Bataus L.A.M."/>
            <person name="Batista J.S."/>
            <person name="Belo A."/>
            <person name="van den Berg C."/>
            <person name="Bogo M."/>
            <person name="Bonatto S."/>
            <person name="Bordignon J."/>
            <person name="Brigido M.M."/>
            <person name="Brito C.A."/>
            <person name="Brocchi M."/>
            <person name="Burity H.A."/>
            <person name="Camargo A.A."/>
            <person name="Cardoso D.D.P."/>
            <person name="Carneiro N.P."/>
            <person name="Carraro D.M."/>
            <person name="Carvalho C.M.B."/>
            <person name="Cascardo J.C.M."/>
            <person name="Cavada B.S."/>
            <person name="Chueire L.M.O."/>
            <person name="Creczynski-Pasa T.B."/>
            <person name="Cunha-Junior N.C."/>
            <person name="Fagundes N."/>
            <person name="Falcao C.L."/>
            <person name="Fantinatti F."/>
            <person name="Farias I.P."/>
            <person name="Felipe M.S.S."/>
            <person name="Ferrari L.P."/>
            <person name="Ferro J.A."/>
            <person name="Ferro M.I.T."/>
            <person name="Franco G.R."/>
            <person name="Freitas N.S.A."/>
            <person name="Furlan L.R."/>
            <person name="Gazzinelli R.T."/>
            <person name="Gomes E.A."/>
            <person name="Goncalves P.R."/>
            <person name="Grangeiro T.B."/>
            <person name="Grattapaglia D."/>
            <person name="Grisard E.C."/>
            <person name="Hanna E.S."/>
            <person name="Jardim S.N."/>
            <person name="Laurino J."/>
            <person name="Leoi L.C.T."/>
            <person name="Lima L.F.A."/>
            <person name="Loureiro M.F."/>
            <person name="Lyra M.C.C.P."/>
            <person name="Madeira H.M.F."/>
            <person name="Manfio G.P."/>
            <person name="Maranhao A.Q."/>
            <person name="Martins W.S."/>
            <person name="di Mauro S.M.Z."/>
            <person name="de Medeiros S.R.B."/>
            <person name="Meissner R.V."/>
            <person name="Moreira M.A.M."/>
            <person name="Nascimento F.F."/>
            <person name="Nicolas M.F."/>
            <person name="Oliveira J.G."/>
            <person name="Oliveira S.C."/>
            <person name="Paixao R.F.C."/>
            <person name="Parente J.A."/>
            <person name="Pedrosa F.O."/>
            <person name="Pena S.D.J."/>
            <person name="Pereira J.O."/>
            <person name="Pereira M."/>
            <person name="Pinto L.S.R.C."/>
            <person name="Pinto L.S."/>
            <person name="Porto J.I.R."/>
            <person name="Potrich D.P."/>
            <person name="Ramalho-Neto C.E."/>
            <person name="Reis A.M.M."/>
            <person name="Rigo L.U."/>
            <person name="Rondinelli E."/>
            <person name="Santos E.B.P."/>
            <person name="Santos F.R."/>
            <person name="Schneider M.P.C."/>
            <person name="Seuanez H.N."/>
            <person name="Silva A.M.R."/>
            <person name="da Silva A.L.C."/>
            <person name="Silva D.W."/>
            <person name="Silva R."/>
            <person name="Simoes I.C."/>
            <person name="Simon D."/>
            <person name="Soares C.M.A."/>
            <person name="Soares R.B.A."/>
            <person name="Souza E.M."/>
            <person name="Souza K.R.L."/>
            <person name="Souza R.C."/>
            <person name="Steffens M.B.R."/>
            <person name="Steindel M."/>
            <person name="Teixeira S.R."/>
            <person name="Urmenyi T."/>
            <person name="Vettore A."/>
            <person name="Wassem R."/>
            <person name="Zaha A."/>
            <person name="Simpson A.J.G."/>
        </authorList>
    </citation>
    <scope>NUCLEOTIDE SEQUENCE [LARGE SCALE GENOMIC DNA]</scope>
    <source>
        <strain>ATCC 12472 / DSM 30191 / JCM 1249 / CCUG 213 / NBRC 12614 / NCIMB 9131 / NCTC 9757 / MK</strain>
    </source>
</reference>
<feature type="chain" id="PRO_0000137192" description="Translation initiation factor IF-2">
    <location>
        <begin position="1"/>
        <end position="964"/>
    </location>
</feature>
<feature type="domain" description="tr-type G">
    <location>
        <begin position="464"/>
        <end position="633"/>
    </location>
</feature>
<feature type="region of interest" description="Disordered" evidence="3">
    <location>
        <begin position="26"/>
        <end position="375"/>
    </location>
</feature>
<feature type="region of interest" description="G1" evidence="1">
    <location>
        <begin position="473"/>
        <end position="480"/>
    </location>
</feature>
<feature type="region of interest" description="G2" evidence="1">
    <location>
        <begin position="498"/>
        <end position="502"/>
    </location>
</feature>
<feature type="region of interest" description="G3" evidence="1">
    <location>
        <begin position="519"/>
        <end position="522"/>
    </location>
</feature>
<feature type="region of interest" description="G4" evidence="1">
    <location>
        <begin position="573"/>
        <end position="576"/>
    </location>
</feature>
<feature type="region of interest" description="G5" evidence="1">
    <location>
        <begin position="609"/>
        <end position="611"/>
    </location>
</feature>
<feature type="compositionally biased region" description="Basic and acidic residues" evidence="3">
    <location>
        <begin position="49"/>
        <end position="60"/>
    </location>
</feature>
<feature type="compositionally biased region" description="Basic and acidic residues" evidence="3">
    <location>
        <begin position="91"/>
        <end position="103"/>
    </location>
</feature>
<feature type="compositionally biased region" description="Basic and acidic residues" evidence="3">
    <location>
        <begin position="118"/>
        <end position="154"/>
    </location>
</feature>
<feature type="compositionally biased region" description="Basic and acidic residues" evidence="3">
    <location>
        <begin position="174"/>
        <end position="206"/>
    </location>
</feature>
<feature type="compositionally biased region" description="Basic and acidic residues" evidence="3">
    <location>
        <begin position="225"/>
        <end position="236"/>
    </location>
</feature>
<feature type="compositionally biased region" description="Basic and acidic residues" evidence="3">
    <location>
        <begin position="243"/>
        <end position="252"/>
    </location>
</feature>
<feature type="compositionally biased region" description="Basic and acidic residues" evidence="3">
    <location>
        <begin position="328"/>
        <end position="339"/>
    </location>
</feature>
<feature type="binding site" evidence="2">
    <location>
        <begin position="473"/>
        <end position="480"/>
    </location>
    <ligand>
        <name>GTP</name>
        <dbReference type="ChEBI" id="CHEBI:37565"/>
    </ligand>
</feature>
<feature type="binding site" evidence="2">
    <location>
        <begin position="519"/>
        <end position="523"/>
    </location>
    <ligand>
        <name>GTP</name>
        <dbReference type="ChEBI" id="CHEBI:37565"/>
    </ligand>
</feature>
<feature type="binding site" evidence="2">
    <location>
        <begin position="573"/>
        <end position="576"/>
    </location>
    <ligand>
        <name>GTP</name>
        <dbReference type="ChEBI" id="CHEBI:37565"/>
    </ligand>
</feature>
<protein>
    <recommendedName>
        <fullName evidence="2">Translation initiation factor IF-2</fullName>
    </recommendedName>
</protein>
<proteinExistence type="inferred from homology"/>
<name>IF2_CHRVO</name>
<sequence>MVLTNVKQFASEMNLTPERLLEQLRAAGVSKRSPEDSLSAQDKSQLLDYLKRSHGAREDSGITLTRKSTSEVKKADGSTVTVETRKKRVVVRPDDAPRAEAPKPAEPAPAPAAAPAEAKPEPKPEPKVEAKPEPKPEPKPEPKVEAKPEPKPEPKPAAAPAPRTVASILSPEEIAAREAEEKRQAAFRARQEALMREKIEREERRQAAKLAASQPAPEPAPVVEPQREERRDDRRGAPSGDNRGPRGNDNRGPRPAGAGDRGPRPGGDNRGPRPAGAGDRGPRPGGDNRGPRPAGAGDRGPRPAPAAAAPSQPPAPAPGGSRPGKGKKGGERSWDDNKKGGRGLKTKGGDAGNDWKSRGGKGRNKQNNQHAFQAPTEPIVHEVLVPETITVAELAHKMAVKAVEVIKTLMKMGMMVTINQVLDQETALIVVEEMGHIGKAAQADDPEAYLDVTDGETVEVVEQPRSPVVTVMGHVDHGKTSLLDYIRRAKVAAGEAGGITQHIGAYHVETPRGMITFLDTPGHEAFTAMRARGAKATDIVVLVVAADDGVMPQTIEAIHHAKAAKVPMVVAVNKIDKQGANVERIRQELVAHEVVPEDWGGDTQFVEVSAKMGLNIDALLEAILLQAEVLELKAPVDSLAKGIIVEARLDKGRGPVATLLVQSGTLKKGDVVLAGTAFGRVRAMMDENGKAIDSAGPAIPVEILGLSDVPQAGEDAMALADEKKAREIALFRAGKFRDVRLAKQQAAKLENMFAQMAEGEVQTLSIIIKADVQGSYEALAGSLQKLSTEEVRVAILHSGVGGISESDVNLAIASKAIVIGFNTRADAAARKLAENEGVDIRYYNIIYDAVDEVKAALSGMLAPEKKEQILGTVEIRQVITVSKVGNIAGCMVTDGMIKRSASIRLIRNHVVIHTGELESLKRFKDDVKEVKQGYECGLMLKNFNDIQEGDQLEAFEIVEVARSL</sequence>
<organism>
    <name type="scientific">Chromobacterium violaceum (strain ATCC 12472 / DSM 30191 / JCM 1249 / CCUG 213 / NBRC 12614 / NCIMB 9131 / NCTC 9757 / MK)</name>
    <dbReference type="NCBI Taxonomy" id="243365"/>
    <lineage>
        <taxon>Bacteria</taxon>
        <taxon>Pseudomonadati</taxon>
        <taxon>Pseudomonadota</taxon>
        <taxon>Betaproteobacteria</taxon>
        <taxon>Neisseriales</taxon>
        <taxon>Chromobacteriaceae</taxon>
        <taxon>Chromobacterium</taxon>
    </lineage>
</organism>
<dbReference type="EMBL" id="AE016825">
    <property type="protein sequence ID" value="AAQ59137.1"/>
    <property type="molecule type" value="Genomic_DNA"/>
</dbReference>
<dbReference type="RefSeq" id="WP_011135014.1">
    <property type="nucleotide sequence ID" value="NC_005085.1"/>
</dbReference>
<dbReference type="SMR" id="Q7NY13"/>
<dbReference type="STRING" id="243365.CV_1462"/>
<dbReference type="KEGG" id="cvi:CV_1462"/>
<dbReference type="eggNOG" id="COG0532">
    <property type="taxonomic scope" value="Bacteria"/>
</dbReference>
<dbReference type="HOGENOM" id="CLU_006301_6_0_4"/>
<dbReference type="OrthoDB" id="9811804at2"/>
<dbReference type="Proteomes" id="UP000001424">
    <property type="component" value="Chromosome"/>
</dbReference>
<dbReference type="GO" id="GO:0005829">
    <property type="term" value="C:cytosol"/>
    <property type="evidence" value="ECO:0007669"/>
    <property type="project" value="TreeGrafter"/>
</dbReference>
<dbReference type="GO" id="GO:0005525">
    <property type="term" value="F:GTP binding"/>
    <property type="evidence" value="ECO:0007669"/>
    <property type="project" value="UniProtKB-KW"/>
</dbReference>
<dbReference type="GO" id="GO:0003924">
    <property type="term" value="F:GTPase activity"/>
    <property type="evidence" value="ECO:0007669"/>
    <property type="project" value="UniProtKB-UniRule"/>
</dbReference>
<dbReference type="GO" id="GO:0003743">
    <property type="term" value="F:translation initiation factor activity"/>
    <property type="evidence" value="ECO:0007669"/>
    <property type="project" value="UniProtKB-UniRule"/>
</dbReference>
<dbReference type="CDD" id="cd01887">
    <property type="entry name" value="IF2_eIF5B"/>
    <property type="match status" value="1"/>
</dbReference>
<dbReference type="CDD" id="cd03702">
    <property type="entry name" value="IF2_mtIF2_II"/>
    <property type="match status" value="1"/>
</dbReference>
<dbReference type="CDD" id="cd03692">
    <property type="entry name" value="mtIF2_IVc"/>
    <property type="match status" value="1"/>
</dbReference>
<dbReference type="FunFam" id="2.40.30.10:FF:000007">
    <property type="entry name" value="Translation initiation factor IF-2"/>
    <property type="match status" value="1"/>
</dbReference>
<dbReference type="FunFam" id="2.40.30.10:FF:000008">
    <property type="entry name" value="Translation initiation factor IF-2"/>
    <property type="match status" value="1"/>
</dbReference>
<dbReference type="FunFam" id="3.40.50.10050:FF:000001">
    <property type="entry name" value="Translation initiation factor IF-2"/>
    <property type="match status" value="1"/>
</dbReference>
<dbReference type="FunFam" id="3.40.50.300:FF:000019">
    <property type="entry name" value="Translation initiation factor IF-2"/>
    <property type="match status" value="1"/>
</dbReference>
<dbReference type="Gene3D" id="3.40.50.300">
    <property type="entry name" value="P-loop containing nucleotide triphosphate hydrolases"/>
    <property type="match status" value="1"/>
</dbReference>
<dbReference type="Gene3D" id="3.30.56.50">
    <property type="entry name" value="Putative DNA-binding domain, N-terminal subdomain of bacterial translation initiation factor IF2"/>
    <property type="match status" value="1"/>
</dbReference>
<dbReference type="Gene3D" id="2.40.30.10">
    <property type="entry name" value="Translation factors"/>
    <property type="match status" value="2"/>
</dbReference>
<dbReference type="Gene3D" id="3.40.50.10050">
    <property type="entry name" value="Translation initiation factor IF- 2, domain 3"/>
    <property type="match status" value="1"/>
</dbReference>
<dbReference type="HAMAP" id="MF_00100_B">
    <property type="entry name" value="IF_2_B"/>
    <property type="match status" value="1"/>
</dbReference>
<dbReference type="InterPro" id="IPR009061">
    <property type="entry name" value="DNA-bd_dom_put_sf"/>
</dbReference>
<dbReference type="InterPro" id="IPR053905">
    <property type="entry name" value="EF-G-like_DII"/>
</dbReference>
<dbReference type="InterPro" id="IPR013575">
    <property type="entry name" value="IF2_assoc_dom_bac"/>
</dbReference>
<dbReference type="InterPro" id="IPR044145">
    <property type="entry name" value="IF2_II"/>
</dbReference>
<dbReference type="InterPro" id="IPR006847">
    <property type="entry name" value="IF2_N"/>
</dbReference>
<dbReference type="InterPro" id="IPR027417">
    <property type="entry name" value="P-loop_NTPase"/>
</dbReference>
<dbReference type="InterPro" id="IPR005225">
    <property type="entry name" value="Small_GTP-bd"/>
</dbReference>
<dbReference type="InterPro" id="IPR000795">
    <property type="entry name" value="T_Tr_GTP-bd_dom"/>
</dbReference>
<dbReference type="InterPro" id="IPR000178">
    <property type="entry name" value="TF_IF2_bacterial-like"/>
</dbReference>
<dbReference type="InterPro" id="IPR015760">
    <property type="entry name" value="TIF_IF2"/>
</dbReference>
<dbReference type="InterPro" id="IPR023115">
    <property type="entry name" value="TIF_IF2_dom3"/>
</dbReference>
<dbReference type="InterPro" id="IPR036925">
    <property type="entry name" value="TIF_IF2_dom3_sf"/>
</dbReference>
<dbReference type="InterPro" id="IPR009000">
    <property type="entry name" value="Transl_B-barrel_sf"/>
</dbReference>
<dbReference type="NCBIfam" id="TIGR00487">
    <property type="entry name" value="IF-2"/>
    <property type="match status" value="1"/>
</dbReference>
<dbReference type="NCBIfam" id="TIGR00231">
    <property type="entry name" value="small_GTP"/>
    <property type="match status" value="1"/>
</dbReference>
<dbReference type="PANTHER" id="PTHR43381:SF5">
    <property type="entry name" value="TR-TYPE G DOMAIN-CONTAINING PROTEIN"/>
    <property type="match status" value="1"/>
</dbReference>
<dbReference type="PANTHER" id="PTHR43381">
    <property type="entry name" value="TRANSLATION INITIATION FACTOR IF-2-RELATED"/>
    <property type="match status" value="1"/>
</dbReference>
<dbReference type="Pfam" id="PF22042">
    <property type="entry name" value="EF-G_D2"/>
    <property type="match status" value="1"/>
</dbReference>
<dbReference type="Pfam" id="PF00009">
    <property type="entry name" value="GTP_EFTU"/>
    <property type="match status" value="1"/>
</dbReference>
<dbReference type="Pfam" id="PF11987">
    <property type="entry name" value="IF-2"/>
    <property type="match status" value="1"/>
</dbReference>
<dbReference type="Pfam" id="PF08364">
    <property type="entry name" value="IF2_assoc"/>
    <property type="match status" value="1"/>
</dbReference>
<dbReference type="Pfam" id="PF04760">
    <property type="entry name" value="IF2_N"/>
    <property type="match status" value="2"/>
</dbReference>
<dbReference type="SUPFAM" id="SSF52156">
    <property type="entry name" value="Initiation factor IF2/eIF5b, domain 3"/>
    <property type="match status" value="1"/>
</dbReference>
<dbReference type="SUPFAM" id="SSF52540">
    <property type="entry name" value="P-loop containing nucleoside triphosphate hydrolases"/>
    <property type="match status" value="1"/>
</dbReference>
<dbReference type="SUPFAM" id="SSF46955">
    <property type="entry name" value="Putative DNA-binding domain"/>
    <property type="match status" value="1"/>
</dbReference>
<dbReference type="SUPFAM" id="SSF50447">
    <property type="entry name" value="Translation proteins"/>
    <property type="match status" value="2"/>
</dbReference>
<dbReference type="PROSITE" id="PS51722">
    <property type="entry name" value="G_TR_2"/>
    <property type="match status" value="1"/>
</dbReference>
<dbReference type="PROSITE" id="PS01176">
    <property type="entry name" value="IF2"/>
    <property type="match status" value="1"/>
</dbReference>
<gene>
    <name evidence="2" type="primary">infB</name>
    <name type="ordered locus">CV_1462</name>
</gene>
<comment type="function">
    <text evidence="2">One of the essential components for the initiation of protein synthesis. Protects formylmethionyl-tRNA from spontaneous hydrolysis and promotes its binding to the 30S ribosomal subunits. Also involved in the hydrolysis of GTP during the formation of the 70S ribosomal complex.</text>
</comment>
<comment type="subcellular location">
    <subcellularLocation>
        <location evidence="2">Cytoplasm</location>
    </subcellularLocation>
</comment>
<comment type="similarity">
    <text evidence="2">Belongs to the TRAFAC class translation factor GTPase superfamily. Classic translation factor GTPase family. IF-2 subfamily.</text>
</comment>
<evidence type="ECO:0000250" key="1"/>
<evidence type="ECO:0000255" key="2">
    <source>
        <dbReference type="HAMAP-Rule" id="MF_00100"/>
    </source>
</evidence>
<evidence type="ECO:0000256" key="3">
    <source>
        <dbReference type="SAM" id="MobiDB-lite"/>
    </source>
</evidence>
<accession>Q7NY13</accession>
<keyword id="KW-0963">Cytoplasm</keyword>
<keyword id="KW-0342">GTP-binding</keyword>
<keyword id="KW-0396">Initiation factor</keyword>
<keyword id="KW-0547">Nucleotide-binding</keyword>
<keyword id="KW-0648">Protein biosynthesis</keyword>
<keyword id="KW-1185">Reference proteome</keyword>